<proteinExistence type="evidence at protein level"/>
<keyword id="KW-0067">ATP-binding</keyword>
<keyword id="KW-0418">Kinase</keyword>
<keyword id="KW-0547">Nucleotide-binding</keyword>
<keyword id="KW-0597">Phosphoprotein</keyword>
<keyword id="KW-1185">Reference proteome</keyword>
<keyword id="KW-0723">Serine/threonine-protein kinase</keyword>
<keyword id="KW-0808">Transferase</keyword>
<dbReference type="EC" id="2.7.11.24"/>
<dbReference type="EMBL" id="Z99708">
    <property type="protein sequence ID" value="CAB16812.1"/>
    <property type="molecule type" value="Genomic_DNA"/>
</dbReference>
<dbReference type="EMBL" id="AL161589">
    <property type="protein sequence ID" value="CAB80311.1"/>
    <property type="molecule type" value="Genomic_DNA"/>
</dbReference>
<dbReference type="EMBL" id="CP002687">
    <property type="protein sequence ID" value="AEE86657.1"/>
    <property type="molecule type" value="Genomic_DNA"/>
</dbReference>
<dbReference type="EMBL" id="DQ056668">
    <property type="protein sequence ID" value="AAY78814.1"/>
    <property type="molecule type" value="mRNA"/>
</dbReference>
<dbReference type="PIR" id="C85430">
    <property type="entry name" value="C85430"/>
</dbReference>
<dbReference type="RefSeq" id="NP_195363.1">
    <property type="nucleotide sequence ID" value="NM_119808.2"/>
</dbReference>
<dbReference type="SMR" id="O23236"/>
<dbReference type="FunCoup" id="O23236">
    <property type="interactions" value="2088"/>
</dbReference>
<dbReference type="IntAct" id="O23236">
    <property type="interactions" value="1"/>
</dbReference>
<dbReference type="STRING" id="3702.O23236"/>
<dbReference type="PaxDb" id="3702-AT4G36450.1"/>
<dbReference type="ProteomicsDB" id="239070"/>
<dbReference type="EnsemblPlants" id="AT4G36450.1">
    <property type="protein sequence ID" value="AT4G36450.1"/>
    <property type="gene ID" value="AT4G36450"/>
</dbReference>
<dbReference type="GeneID" id="829797"/>
<dbReference type="Gramene" id="AT4G36450.1">
    <property type="protein sequence ID" value="AT4G36450.1"/>
    <property type="gene ID" value="AT4G36450"/>
</dbReference>
<dbReference type="KEGG" id="ath:AT4G36450"/>
<dbReference type="Araport" id="AT4G36450"/>
<dbReference type="TAIR" id="AT4G36450">
    <property type="gene designation" value="MPK14"/>
</dbReference>
<dbReference type="eggNOG" id="KOG0660">
    <property type="taxonomic scope" value="Eukaryota"/>
</dbReference>
<dbReference type="HOGENOM" id="CLU_000288_181_1_1"/>
<dbReference type="InParanoid" id="O23236"/>
<dbReference type="OMA" id="QGHAFES"/>
<dbReference type="PhylomeDB" id="O23236"/>
<dbReference type="PRO" id="PR:O23236"/>
<dbReference type="Proteomes" id="UP000006548">
    <property type="component" value="Chromosome 4"/>
</dbReference>
<dbReference type="ExpressionAtlas" id="O23236">
    <property type="expression patterns" value="baseline and differential"/>
</dbReference>
<dbReference type="GO" id="GO:0005524">
    <property type="term" value="F:ATP binding"/>
    <property type="evidence" value="ECO:0007669"/>
    <property type="project" value="UniProtKB-KW"/>
</dbReference>
<dbReference type="GO" id="GO:0004707">
    <property type="term" value="F:MAP kinase activity"/>
    <property type="evidence" value="ECO:0000250"/>
    <property type="project" value="TAIR"/>
</dbReference>
<dbReference type="GO" id="GO:0106310">
    <property type="term" value="F:protein serine kinase activity"/>
    <property type="evidence" value="ECO:0007669"/>
    <property type="project" value="RHEA"/>
</dbReference>
<dbReference type="FunFam" id="1.10.510.10:FF:000206">
    <property type="entry name" value="Mitogen-activated protein kinase"/>
    <property type="match status" value="1"/>
</dbReference>
<dbReference type="FunFam" id="3.30.200.20:FF:000046">
    <property type="entry name" value="Mitogen-activated protein kinase"/>
    <property type="match status" value="1"/>
</dbReference>
<dbReference type="Gene3D" id="3.30.200.20">
    <property type="entry name" value="Phosphorylase Kinase, domain 1"/>
    <property type="match status" value="1"/>
</dbReference>
<dbReference type="Gene3D" id="1.10.510.10">
    <property type="entry name" value="Transferase(Phosphotransferase) domain 1"/>
    <property type="match status" value="1"/>
</dbReference>
<dbReference type="InterPro" id="IPR011009">
    <property type="entry name" value="Kinase-like_dom_sf"/>
</dbReference>
<dbReference type="InterPro" id="IPR050117">
    <property type="entry name" value="MAP_kinase"/>
</dbReference>
<dbReference type="InterPro" id="IPR003527">
    <property type="entry name" value="MAP_kinase_CS"/>
</dbReference>
<dbReference type="InterPro" id="IPR000719">
    <property type="entry name" value="Prot_kinase_dom"/>
</dbReference>
<dbReference type="InterPro" id="IPR017441">
    <property type="entry name" value="Protein_kinase_ATP_BS"/>
</dbReference>
<dbReference type="InterPro" id="IPR008271">
    <property type="entry name" value="Ser/Thr_kinase_AS"/>
</dbReference>
<dbReference type="PANTHER" id="PTHR24055">
    <property type="entry name" value="MITOGEN-ACTIVATED PROTEIN KINASE"/>
    <property type="match status" value="1"/>
</dbReference>
<dbReference type="Pfam" id="PF00069">
    <property type="entry name" value="Pkinase"/>
    <property type="match status" value="1"/>
</dbReference>
<dbReference type="SMART" id="SM00220">
    <property type="entry name" value="S_TKc"/>
    <property type="match status" value="1"/>
</dbReference>
<dbReference type="SUPFAM" id="SSF56112">
    <property type="entry name" value="Protein kinase-like (PK-like)"/>
    <property type="match status" value="1"/>
</dbReference>
<dbReference type="PROSITE" id="PS01351">
    <property type="entry name" value="MAPK"/>
    <property type="match status" value="1"/>
</dbReference>
<dbReference type="PROSITE" id="PS00107">
    <property type="entry name" value="PROTEIN_KINASE_ATP"/>
    <property type="match status" value="1"/>
</dbReference>
<dbReference type="PROSITE" id="PS50011">
    <property type="entry name" value="PROTEIN_KINASE_DOM"/>
    <property type="match status" value="1"/>
</dbReference>
<dbReference type="PROSITE" id="PS00108">
    <property type="entry name" value="PROTEIN_KINASE_ST"/>
    <property type="match status" value="1"/>
</dbReference>
<organism>
    <name type="scientific">Arabidopsis thaliana</name>
    <name type="common">Mouse-ear cress</name>
    <dbReference type="NCBI Taxonomy" id="3702"/>
    <lineage>
        <taxon>Eukaryota</taxon>
        <taxon>Viridiplantae</taxon>
        <taxon>Streptophyta</taxon>
        <taxon>Embryophyta</taxon>
        <taxon>Tracheophyta</taxon>
        <taxon>Spermatophyta</taxon>
        <taxon>Magnoliopsida</taxon>
        <taxon>eudicotyledons</taxon>
        <taxon>Gunneridae</taxon>
        <taxon>Pentapetalae</taxon>
        <taxon>rosids</taxon>
        <taxon>malvids</taxon>
        <taxon>Brassicales</taxon>
        <taxon>Brassicaceae</taxon>
        <taxon>Camelineae</taxon>
        <taxon>Arabidopsis</taxon>
    </lineage>
</organism>
<protein>
    <recommendedName>
        <fullName>Mitogen-activated protein kinase 14</fullName>
        <shortName>AtMPK14</shortName>
        <shortName>MAP kinase 14</shortName>
        <ecNumber>2.7.11.24</ecNumber>
    </recommendedName>
</protein>
<accession>O23236</accession>
<name>MPK14_ARATH</name>
<gene>
    <name type="primary">MPK14</name>
    <name type="ordered locus">At4g36450</name>
    <name type="ORF">AP22.98</name>
    <name type="ORF">C7A10.910</name>
</gene>
<evidence type="ECO:0000250" key="1"/>
<evidence type="ECO:0000250" key="2">
    <source>
        <dbReference type="UniProtKB" id="Q39026"/>
    </source>
</evidence>
<evidence type="ECO:0000255" key="3">
    <source>
        <dbReference type="PROSITE-ProRule" id="PRU00159"/>
    </source>
</evidence>
<evidence type="ECO:0000255" key="4">
    <source>
        <dbReference type="PROSITE-ProRule" id="PRU10027"/>
    </source>
</evidence>
<evidence type="ECO:0000269" key="5">
    <source>
    </source>
</evidence>
<evidence type="ECO:0000305" key="6"/>
<reference key="1">
    <citation type="journal article" date="1998" name="Nature">
        <title>Analysis of 1.9 Mb of contiguous sequence from chromosome 4 of Arabidopsis thaliana.</title>
        <authorList>
            <person name="Bevan M."/>
            <person name="Bancroft I."/>
            <person name="Bent E."/>
            <person name="Love K."/>
            <person name="Goodman H.M."/>
            <person name="Dean C."/>
            <person name="Bergkamp R."/>
            <person name="Dirkse W."/>
            <person name="van Staveren M."/>
            <person name="Stiekema W."/>
            <person name="Drost L."/>
            <person name="Ridley P."/>
            <person name="Hudson S.-A."/>
            <person name="Patel K."/>
            <person name="Murphy G."/>
            <person name="Piffanelli P."/>
            <person name="Wedler H."/>
            <person name="Wedler E."/>
            <person name="Wambutt R."/>
            <person name="Weitzenegger T."/>
            <person name="Pohl T."/>
            <person name="Terryn N."/>
            <person name="Gielen J."/>
            <person name="Villarroel R."/>
            <person name="De Clercq R."/>
            <person name="van Montagu M."/>
            <person name="Lecharny A."/>
            <person name="Aubourg S."/>
            <person name="Gy I."/>
            <person name="Kreis M."/>
            <person name="Lao N."/>
            <person name="Kavanagh T."/>
            <person name="Hempel S."/>
            <person name="Kotter P."/>
            <person name="Entian K.-D."/>
            <person name="Rieger M."/>
            <person name="Schaefer M."/>
            <person name="Funk B."/>
            <person name="Mueller-Auer S."/>
            <person name="Silvey M."/>
            <person name="James R."/>
            <person name="Monfort A."/>
            <person name="Pons A."/>
            <person name="Puigdomenech P."/>
            <person name="Douka A."/>
            <person name="Voukelatou E."/>
            <person name="Milioni D."/>
            <person name="Hatzopoulos P."/>
            <person name="Piravandi E."/>
            <person name="Obermaier B."/>
            <person name="Hilbert H."/>
            <person name="Duesterhoeft A."/>
            <person name="Moores T."/>
            <person name="Jones J.D.G."/>
            <person name="Eneva T."/>
            <person name="Palme K."/>
            <person name="Benes V."/>
            <person name="Rechmann S."/>
            <person name="Ansorge W."/>
            <person name="Cooke R."/>
            <person name="Berger C."/>
            <person name="Delseny M."/>
            <person name="Voet M."/>
            <person name="Volckaert G."/>
            <person name="Mewes H.-W."/>
            <person name="Klosterman S."/>
            <person name="Schueller C."/>
            <person name="Chalwatzis N."/>
        </authorList>
    </citation>
    <scope>NUCLEOTIDE SEQUENCE [LARGE SCALE GENOMIC DNA]</scope>
    <source>
        <strain>cv. Columbia</strain>
    </source>
</reference>
<reference key="2">
    <citation type="journal article" date="1999" name="Nature">
        <title>Sequence and analysis of chromosome 4 of the plant Arabidopsis thaliana.</title>
        <authorList>
            <person name="Mayer K.F.X."/>
            <person name="Schueller C."/>
            <person name="Wambutt R."/>
            <person name="Murphy G."/>
            <person name="Volckaert G."/>
            <person name="Pohl T."/>
            <person name="Duesterhoeft A."/>
            <person name="Stiekema W."/>
            <person name="Entian K.-D."/>
            <person name="Terryn N."/>
            <person name="Harris B."/>
            <person name="Ansorge W."/>
            <person name="Brandt P."/>
            <person name="Grivell L.A."/>
            <person name="Rieger M."/>
            <person name="Weichselgartner M."/>
            <person name="de Simone V."/>
            <person name="Obermaier B."/>
            <person name="Mache R."/>
            <person name="Mueller M."/>
            <person name="Kreis M."/>
            <person name="Delseny M."/>
            <person name="Puigdomenech P."/>
            <person name="Watson M."/>
            <person name="Schmidtheini T."/>
            <person name="Reichert B."/>
            <person name="Portetelle D."/>
            <person name="Perez-Alonso M."/>
            <person name="Boutry M."/>
            <person name="Bancroft I."/>
            <person name="Vos P."/>
            <person name="Hoheisel J."/>
            <person name="Zimmermann W."/>
            <person name="Wedler H."/>
            <person name="Ridley P."/>
            <person name="Langham S.-A."/>
            <person name="McCullagh B."/>
            <person name="Bilham L."/>
            <person name="Robben J."/>
            <person name="van der Schueren J."/>
            <person name="Grymonprez B."/>
            <person name="Chuang Y.-J."/>
            <person name="Vandenbussche F."/>
            <person name="Braeken M."/>
            <person name="Weltjens I."/>
            <person name="Voet M."/>
            <person name="Bastiaens I."/>
            <person name="Aert R."/>
            <person name="Defoor E."/>
            <person name="Weitzenegger T."/>
            <person name="Bothe G."/>
            <person name="Ramsperger U."/>
            <person name="Hilbert H."/>
            <person name="Braun M."/>
            <person name="Holzer E."/>
            <person name="Brandt A."/>
            <person name="Peters S."/>
            <person name="van Staveren M."/>
            <person name="Dirkse W."/>
            <person name="Mooijman P."/>
            <person name="Klein Lankhorst R."/>
            <person name="Rose M."/>
            <person name="Hauf J."/>
            <person name="Koetter P."/>
            <person name="Berneiser S."/>
            <person name="Hempel S."/>
            <person name="Feldpausch M."/>
            <person name="Lamberth S."/>
            <person name="Van den Daele H."/>
            <person name="De Keyser A."/>
            <person name="Buysshaert C."/>
            <person name="Gielen J."/>
            <person name="Villarroel R."/>
            <person name="De Clercq R."/>
            <person name="van Montagu M."/>
            <person name="Rogers J."/>
            <person name="Cronin A."/>
            <person name="Quail M.A."/>
            <person name="Bray-Allen S."/>
            <person name="Clark L."/>
            <person name="Doggett J."/>
            <person name="Hall S."/>
            <person name="Kay M."/>
            <person name="Lennard N."/>
            <person name="McLay K."/>
            <person name="Mayes R."/>
            <person name="Pettett A."/>
            <person name="Rajandream M.A."/>
            <person name="Lyne M."/>
            <person name="Benes V."/>
            <person name="Rechmann S."/>
            <person name="Borkova D."/>
            <person name="Bloecker H."/>
            <person name="Scharfe M."/>
            <person name="Grimm M."/>
            <person name="Loehnert T.-H."/>
            <person name="Dose S."/>
            <person name="de Haan M."/>
            <person name="Maarse A.C."/>
            <person name="Schaefer M."/>
            <person name="Mueller-Auer S."/>
            <person name="Gabel C."/>
            <person name="Fuchs M."/>
            <person name="Fartmann B."/>
            <person name="Granderath K."/>
            <person name="Dauner D."/>
            <person name="Herzl A."/>
            <person name="Neumann S."/>
            <person name="Argiriou A."/>
            <person name="Vitale D."/>
            <person name="Liguori R."/>
            <person name="Piravandi E."/>
            <person name="Massenet O."/>
            <person name="Quigley F."/>
            <person name="Clabauld G."/>
            <person name="Muendlein A."/>
            <person name="Felber R."/>
            <person name="Schnabl S."/>
            <person name="Hiller R."/>
            <person name="Schmidt W."/>
            <person name="Lecharny A."/>
            <person name="Aubourg S."/>
            <person name="Chefdor F."/>
            <person name="Cooke R."/>
            <person name="Berger C."/>
            <person name="Monfort A."/>
            <person name="Casacuberta E."/>
            <person name="Gibbons T."/>
            <person name="Weber N."/>
            <person name="Vandenbol M."/>
            <person name="Bargues M."/>
            <person name="Terol J."/>
            <person name="Torres A."/>
            <person name="Perez-Perez A."/>
            <person name="Purnelle B."/>
            <person name="Bent E."/>
            <person name="Johnson S."/>
            <person name="Tacon D."/>
            <person name="Jesse T."/>
            <person name="Heijnen L."/>
            <person name="Schwarz S."/>
            <person name="Scholler P."/>
            <person name="Heber S."/>
            <person name="Francs P."/>
            <person name="Bielke C."/>
            <person name="Frishman D."/>
            <person name="Haase D."/>
            <person name="Lemcke K."/>
            <person name="Mewes H.-W."/>
            <person name="Stocker S."/>
            <person name="Zaccaria P."/>
            <person name="Bevan M."/>
            <person name="Wilson R.K."/>
            <person name="de la Bastide M."/>
            <person name="Habermann K."/>
            <person name="Parnell L."/>
            <person name="Dedhia N."/>
            <person name="Gnoj L."/>
            <person name="Schutz K."/>
            <person name="Huang E."/>
            <person name="Spiegel L."/>
            <person name="Sekhon M."/>
            <person name="Murray J."/>
            <person name="Sheet P."/>
            <person name="Cordes M."/>
            <person name="Abu-Threideh J."/>
            <person name="Stoneking T."/>
            <person name="Kalicki J."/>
            <person name="Graves T."/>
            <person name="Harmon G."/>
            <person name="Edwards J."/>
            <person name="Latreille P."/>
            <person name="Courtney L."/>
            <person name="Cloud J."/>
            <person name="Abbott A."/>
            <person name="Scott K."/>
            <person name="Johnson D."/>
            <person name="Minx P."/>
            <person name="Bentley D."/>
            <person name="Fulton B."/>
            <person name="Miller N."/>
            <person name="Greco T."/>
            <person name="Kemp K."/>
            <person name="Kramer J."/>
            <person name="Fulton L."/>
            <person name="Mardis E."/>
            <person name="Dante M."/>
            <person name="Pepin K."/>
            <person name="Hillier L.W."/>
            <person name="Nelson J."/>
            <person name="Spieth J."/>
            <person name="Ryan E."/>
            <person name="Andrews S."/>
            <person name="Geisel C."/>
            <person name="Layman D."/>
            <person name="Du H."/>
            <person name="Ali J."/>
            <person name="Berghoff A."/>
            <person name="Jones K."/>
            <person name="Drone K."/>
            <person name="Cotton M."/>
            <person name="Joshu C."/>
            <person name="Antonoiu B."/>
            <person name="Zidanic M."/>
            <person name="Strong C."/>
            <person name="Sun H."/>
            <person name="Lamar B."/>
            <person name="Yordan C."/>
            <person name="Ma P."/>
            <person name="Zhong J."/>
            <person name="Preston R."/>
            <person name="Vil D."/>
            <person name="Shekher M."/>
            <person name="Matero A."/>
            <person name="Shah R."/>
            <person name="Swaby I.K."/>
            <person name="O'Shaughnessy A."/>
            <person name="Rodriguez M."/>
            <person name="Hoffman J."/>
            <person name="Till S."/>
            <person name="Granat S."/>
            <person name="Shohdy N."/>
            <person name="Hasegawa A."/>
            <person name="Hameed A."/>
            <person name="Lodhi M."/>
            <person name="Johnson A."/>
            <person name="Chen E."/>
            <person name="Marra M.A."/>
            <person name="Martienssen R."/>
            <person name="McCombie W.R."/>
        </authorList>
    </citation>
    <scope>NUCLEOTIDE SEQUENCE [LARGE SCALE GENOMIC DNA]</scope>
    <source>
        <strain>cv. Columbia</strain>
    </source>
</reference>
<reference key="3">
    <citation type="journal article" date="2017" name="Plant J.">
        <title>Araport11: a complete reannotation of the Arabidopsis thaliana reference genome.</title>
        <authorList>
            <person name="Cheng C.Y."/>
            <person name="Krishnakumar V."/>
            <person name="Chan A.P."/>
            <person name="Thibaud-Nissen F."/>
            <person name="Schobel S."/>
            <person name="Town C.D."/>
        </authorList>
    </citation>
    <scope>GENOME REANNOTATION</scope>
    <source>
        <strain>cv. Columbia</strain>
    </source>
</reference>
<reference key="4">
    <citation type="submission" date="2005-05" db="EMBL/GenBank/DDBJ databases">
        <authorList>
            <person name="Underwood B.A."/>
            <person name="Xiao Y.-L."/>
            <person name="Moskal W.A. Jr."/>
            <person name="Monaghan E.L."/>
            <person name="Wang W."/>
            <person name="Redman J.C."/>
            <person name="Wu H.C."/>
            <person name="Utterback T."/>
            <person name="Town C.D."/>
        </authorList>
    </citation>
    <scope>NUCLEOTIDE SEQUENCE [LARGE SCALE MRNA]</scope>
    <source>
        <strain>cv. Columbia</strain>
    </source>
</reference>
<reference key="5">
    <citation type="journal article" date="2002" name="Trends Plant Sci.">
        <title>Mitogen-activated protein kinase cascades in plants: a new nomenclature.</title>
        <authorList>
            <consortium name="MAPK group"/>
        </authorList>
    </citation>
    <scope>GENE FAMILY</scope>
    <scope>NOMENCLATURE</scope>
</reference>
<reference key="6">
    <citation type="journal article" date="2006" name="Trends Plant Sci.">
        <title>Ancient signals: comparative genomics of plant MAPK and MAPKK gene families.</title>
        <authorList>
            <person name="Hamel L.P."/>
            <person name="Nicole M.C."/>
            <person name="Sritubtim S."/>
            <person name="Morency M.J."/>
            <person name="Ellis M."/>
            <person name="Ehlting J."/>
            <person name="Beaudoin N."/>
            <person name="Barbazuk B."/>
            <person name="Klessig D."/>
            <person name="Lee J."/>
            <person name="Martin G."/>
            <person name="Mundy J."/>
            <person name="Ohashi Y."/>
            <person name="Scheel D."/>
            <person name="Sheen J."/>
            <person name="Xing T."/>
            <person name="Zhang S."/>
            <person name="Seguin A."/>
            <person name="Ellis B.E."/>
        </authorList>
    </citation>
    <scope>GENE FAMILY</scope>
</reference>
<reference key="7">
    <citation type="journal article" date="2008" name="Plant Signal. Behav.">
        <title>Comprehensive analysis of protein-protein interactions between Arabidopsis MAPKs and MAPK kinases helps define potential MAPK signalling modules.</title>
        <authorList>
            <person name="Lee J.S."/>
            <person name="Huh K.W."/>
            <person name="Bhargava A."/>
            <person name="Ellis B.E."/>
        </authorList>
    </citation>
    <scope>INTERACTION WITH MKK3</scope>
</reference>
<comment type="catalytic activity">
    <reaction>
        <text>L-seryl-[protein] + ATP = O-phospho-L-seryl-[protein] + ADP + H(+)</text>
        <dbReference type="Rhea" id="RHEA:17989"/>
        <dbReference type="Rhea" id="RHEA-COMP:9863"/>
        <dbReference type="Rhea" id="RHEA-COMP:11604"/>
        <dbReference type="ChEBI" id="CHEBI:15378"/>
        <dbReference type="ChEBI" id="CHEBI:29999"/>
        <dbReference type="ChEBI" id="CHEBI:30616"/>
        <dbReference type="ChEBI" id="CHEBI:83421"/>
        <dbReference type="ChEBI" id="CHEBI:456216"/>
        <dbReference type="EC" id="2.7.11.24"/>
    </reaction>
</comment>
<comment type="catalytic activity">
    <reaction>
        <text>L-threonyl-[protein] + ATP = O-phospho-L-threonyl-[protein] + ADP + H(+)</text>
        <dbReference type="Rhea" id="RHEA:46608"/>
        <dbReference type="Rhea" id="RHEA-COMP:11060"/>
        <dbReference type="Rhea" id="RHEA-COMP:11605"/>
        <dbReference type="ChEBI" id="CHEBI:15378"/>
        <dbReference type="ChEBI" id="CHEBI:30013"/>
        <dbReference type="ChEBI" id="CHEBI:30616"/>
        <dbReference type="ChEBI" id="CHEBI:61977"/>
        <dbReference type="ChEBI" id="CHEBI:456216"/>
        <dbReference type="EC" id="2.7.11.24"/>
    </reaction>
</comment>
<comment type="activity regulation">
    <text evidence="1">Activated by threonine and tyrosine phosphorylation.</text>
</comment>
<comment type="subunit">
    <text evidence="5">Interacts with MKK3.</text>
</comment>
<comment type="domain">
    <text>The TXY motif contains the threonine and tyrosine residues whose phosphorylation activates the MAP kinases.</text>
</comment>
<comment type="PTM">
    <text evidence="1">Dually phosphorylated on Thr-188 and Tyr-190, which activates the enzyme.</text>
</comment>
<comment type="similarity">
    <text evidence="6">Belongs to the protein kinase superfamily. CMGC Ser/Thr protein kinase family. MAP kinase subfamily.</text>
</comment>
<feature type="chain" id="PRO_0000245814" description="Mitogen-activated protein kinase 14">
    <location>
        <begin position="1"/>
        <end position="361"/>
    </location>
</feature>
<feature type="domain" description="Protein kinase" evidence="3">
    <location>
        <begin position="32"/>
        <end position="316"/>
    </location>
</feature>
<feature type="short sequence motif" description="TXY">
    <location>
        <begin position="188"/>
        <end position="190"/>
    </location>
</feature>
<feature type="active site" description="Proton acceptor" evidence="3 4">
    <location>
        <position position="158"/>
    </location>
</feature>
<feature type="binding site" evidence="3">
    <location>
        <begin position="38"/>
        <end position="46"/>
    </location>
    <ligand>
        <name>ATP</name>
        <dbReference type="ChEBI" id="CHEBI:30616"/>
    </ligand>
</feature>
<feature type="binding site" evidence="3">
    <location>
        <position position="61"/>
    </location>
    <ligand>
        <name>ATP</name>
        <dbReference type="ChEBI" id="CHEBI:30616"/>
    </ligand>
</feature>
<feature type="modified residue" description="Phosphothreonine" evidence="2">
    <location>
        <position position="188"/>
    </location>
</feature>
<feature type="modified residue" description="Phosphotyrosine" evidence="2">
    <location>
        <position position="190"/>
    </location>
</feature>
<feature type="modified residue" description="Phosphothreonine" evidence="2">
    <location>
        <position position="193"/>
    </location>
</feature>
<sequence>MAMLVDPPNGIRQEGKHYYTMWQTLFEIDTKYVPIKPIGRGAYGVVCSSINSETNERVAIKKIHNVFENRIDALRTLRELKLLRHVRHENVISLKDVMLPTHRYSFRDVYLVYELMDSDLNQIIKSSQSLSDDHCKYFLFQLLRGLKYLHSANILHRDLKPGNLLVNANCDLKICDFGLARTYEQFMTEYVVTRWYRAPELLLCCDNYGTSIDVWSVGCIFAEILGRKPIFPGTECLNQLKLIINVVGSQQDWDLQFIDNQKARRFIKSLPFSKGTHFSHIYPHANPLAIDLLQRMLVFDPTKRISVSDALLHPYMEGLLEPECNPSENVPVSSLEIDENMEGDMIREMMWEEMLHYLPRA</sequence>